<name>SYE_YERPE</name>
<protein>
    <recommendedName>
        <fullName evidence="1">Glutamate--tRNA ligase</fullName>
        <ecNumber evidence="1">6.1.1.17</ecNumber>
    </recommendedName>
    <alternativeName>
        <fullName evidence="1">Glutamyl-tRNA synthetase</fullName>
        <shortName evidence="1">GluRS</shortName>
    </alternativeName>
</protein>
<accession>Q8ZCK0</accession>
<accession>Q0WCT0</accession>
<dbReference type="EC" id="6.1.1.17" evidence="1"/>
<dbReference type="EMBL" id="AL590842">
    <property type="protein sequence ID" value="CAL21588.1"/>
    <property type="molecule type" value="Genomic_DNA"/>
</dbReference>
<dbReference type="EMBL" id="AE009952">
    <property type="protein sequence ID" value="AAM85069.1"/>
    <property type="molecule type" value="Genomic_DNA"/>
</dbReference>
<dbReference type="EMBL" id="AE017042">
    <property type="protein sequence ID" value="AAS62802.1"/>
    <property type="molecule type" value="Genomic_DNA"/>
</dbReference>
<dbReference type="PIR" id="AI0362">
    <property type="entry name" value="AI0362"/>
</dbReference>
<dbReference type="RefSeq" id="WP_002222185.1">
    <property type="nucleotide sequence ID" value="NZ_WUCM01000029.1"/>
</dbReference>
<dbReference type="RefSeq" id="YP_002347908.1">
    <property type="nucleotide sequence ID" value="NC_003143.1"/>
</dbReference>
<dbReference type="SMR" id="Q8ZCK0"/>
<dbReference type="IntAct" id="Q8ZCK0">
    <property type="interactions" value="1"/>
</dbReference>
<dbReference type="STRING" id="214092.YPO2984"/>
<dbReference type="PaxDb" id="214092-YPO2984"/>
<dbReference type="DNASU" id="1146445"/>
<dbReference type="EnsemblBacteria" id="AAS62802">
    <property type="protein sequence ID" value="AAS62802"/>
    <property type="gene ID" value="YP_2609"/>
</dbReference>
<dbReference type="GeneID" id="57975716"/>
<dbReference type="KEGG" id="ype:YPO2984"/>
<dbReference type="KEGG" id="ypk:y1498"/>
<dbReference type="KEGG" id="ypm:YP_2609"/>
<dbReference type="PATRIC" id="fig|214092.21.peg.3438"/>
<dbReference type="eggNOG" id="COG0008">
    <property type="taxonomic scope" value="Bacteria"/>
</dbReference>
<dbReference type="HOGENOM" id="CLU_015768_6_0_6"/>
<dbReference type="OMA" id="HGATNVM"/>
<dbReference type="OrthoDB" id="9807503at2"/>
<dbReference type="Proteomes" id="UP000000815">
    <property type="component" value="Chromosome"/>
</dbReference>
<dbReference type="Proteomes" id="UP000001019">
    <property type="component" value="Chromosome"/>
</dbReference>
<dbReference type="Proteomes" id="UP000002490">
    <property type="component" value="Chromosome"/>
</dbReference>
<dbReference type="GO" id="GO:0005829">
    <property type="term" value="C:cytosol"/>
    <property type="evidence" value="ECO:0000318"/>
    <property type="project" value="GO_Central"/>
</dbReference>
<dbReference type="GO" id="GO:0005524">
    <property type="term" value="F:ATP binding"/>
    <property type="evidence" value="ECO:0007669"/>
    <property type="project" value="UniProtKB-UniRule"/>
</dbReference>
<dbReference type="GO" id="GO:0004818">
    <property type="term" value="F:glutamate-tRNA ligase activity"/>
    <property type="evidence" value="ECO:0000318"/>
    <property type="project" value="GO_Central"/>
</dbReference>
<dbReference type="GO" id="GO:0000049">
    <property type="term" value="F:tRNA binding"/>
    <property type="evidence" value="ECO:0007669"/>
    <property type="project" value="InterPro"/>
</dbReference>
<dbReference type="GO" id="GO:0008270">
    <property type="term" value="F:zinc ion binding"/>
    <property type="evidence" value="ECO:0007669"/>
    <property type="project" value="UniProtKB-UniRule"/>
</dbReference>
<dbReference type="GO" id="GO:0006424">
    <property type="term" value="P:glutamyl-tRNA aminoacylation"/>
    <property type="evidence" value="ECO:0000318"/>
    <property type="project" value="GO_Central"/>
</dbReference>
<dbReference type="CDD" id="cd00808">
    <property type="entry name" value="GluRS_core"/>
    <property type="match status" value="1"/>
</dbReference>
<dbReference type="FunFam" id="1.10.10.350:FF:000001">
    <property type="entry name" value="Glutamate--tRNA ligase"/>
    <property type="match status" value="1"/>
</dbReference>
<dbReference type="FunFam" id="3.40.50.620:FF:000007">
    <property type="entry name" value="Glutamate--tRNA ligase"/>
    <property type="match status" value="1"/>
</dbReference>
<dbReference type="Gene3D" id="1.10.10.350">
    <property type="match status" value="1"/>
</dbReference>
<dbReference type="Gene3D" id="3.40.50.620">
    <property type="entry name" value="HUPs"/>
    <property type="match status" value="1"/>
</dbReference>
<dbReference type="HAMAP" id="MF_00022">
    <property type="entry name" value="Glu_tRNA_synth_type1"/>
    <property type="match status" value="1"/>
</dbReference>
<dbReference type="InterPro" id="IPR045462">
    <property type="entry name" value="aa-tRNA-synth_I_cd-bd"/>
</dbReference>
<dbReference type="InterPro" id="IPR020751">
    <property type="entry name" value="aa-tRNA-synth_I_codon-bd_sub2"/>
</dbReference>
<dbReference type="InterPro" id="IPR001412">
    <property type="entry name" value="aa-tRNA-synth_I_CS"/>
</dbReference>
<dbReference type="InterPro" id="IPR008925">
    <property type="entry name" value="aa_tRNA-synth_I_cd-bd_sf"/>
</dbReference>
<dbReference type="InterPro" id="IPR004527">
    <property type="entry name" value="Glu-tRNA-ligase_bac/mito"/>
</dbReference>
<dbReference type="InterPro" id="IPR000924">
    <property type="entry name" value="Glu/Gln-tRNA-synth"/>
</dbReference>
<dbReference type="InterPro" id="IPR020058">
    <property type="entry name" value="Glu/Gln-tRNA-synth_Ib_cat-dom"/>
</dbReference>
<dbReference type="InterPro" id="IPR049940">
    <property type="entry name" value="GluQ/Sye"/>
</dbReference>
<dbReference type="InterPro" id="IPR033910">
    <property type="entry name" value="GluRS_core"/>
</dbReference>
<dbReference type="InterPro" id="IPR014729">
    <property type="entry name" value="Rossmann-like_a/b/a_fold"/>
</dbReference>
<dbReference type="NCBIfam" id="TIGR00464">
    <property type="entry name" value="gltX_bact"/>
    <property type="match status" value="1"/>
</dbReference>
<dbReference type="PANTHER" id="PTHR43311">
    <property type="entry name" value="GLUTAMATE--TRNA LIGASE"/>
    <property type="match status" value="1"/>
</dbReference>
<dbReference type="PANTHER" id="PTHR43311:SF2">
    <property type="entry name" value="GLUTAMATE--TRNA LIGASE, MITOCHONDRIAL-RELATED"/>
    <property type="match status" value="1"/>
</dbReference>
<dbReference type="Pfam" id="PF19269">
    <property type="entry name" value="Anticodon_2"/>
    <property type="match status" value="1"/>
</dbReference>
<dbReference type="Pfam" id="PF00749">
    <property type="entry name" value="tRNA-synt_1c"/>
    <property type="match status" value="1"/>
</dbReference>
<dbReference type="PRINTS" id="PR00987">
    <property type="entry name" value="TRNASYNTHGLU"/>
</dbReference>
<dbReference type="SUPFAM" id="SSF48163">
    <property type="entry name" value="An anticodon-binding domain of class I aminoacyl-tRNA synthetases"/>
    <property type="match status" value="1"/>
</dbReference>
<dbReference type="SUPFAM" id="SSF52374">
    <property type="entry name" value="Nucleotidylyl transferase"/>
    <property type="match status" value="1"/>
</dbReference>
<dbReference type="PROSITE" id="PS00178">
    <property type="entry name" value="AA_TRNA_LIGASE_I"/>
    <property type="match status" value="1"/>
</dbReference>
<reference key="1">
    <citation type="journal article" date="2001" name="Nature">
        <title>Genome sequence of Yersinia pestis, the causative agent of plague.</title>
        <authorList>
            <person name="Parkhill J."/>
            <person name="Wren B.W."/>
            <person name="Thomson N.R."/>
            <person name="Titball R.W."/>
            <person name="Holden M.T.G."/>
            <person name="Prentice M.B."/>
            <person name="Sebaihia M."/>
            <person name="James K.D."/>
            <person name="Churcher C.M."/>
            <person name="Mungall K.L."/>
            <person name="Baker S."/>
            <person name="Basham D."/>
            <person name="Bentley S.D."/>
            <person name="Brooks K."/>
            <person name="Cerdeno-Tarraga A.-M."/>
            <person name="Chillingworth T."/>
            <person name="Cronin A."/>
            <person name="Davies R.M."/>
            <person name="Davis P."/>
            <person name="Dougan G."/>
            <person name="Feltwell T."/>
            <person name="Hamlin N."/>
            <person name="Holroyd S."/>
            <person name="Jagels K."/>
            <person name="Karlyshev A.V."/>
            <person name="Leather S."/>
            <person name="Moule S."/>
            <person name="Oyston P.C.F."/>
            <person name="Quail M.A."/>
            <person name="Rutherford K.M."/>
            <person name="Simmonds M."/>
            <person name="Skelton J."/>
            <person name="Stevens K."/>
            <person name="Whitehead S."/>
            <person name="Barrell B.G."/>
        </authorList>
    </citation>
    <scope>NUCLEOTIDE SEQUENCE [LARGE SCALE GENOMIC DNA]</scope>
    <source>
        <strain>CO-92 / Biovar Orientalis</strain>
    </source>
</reference>
<reference key="2">
    <citation type="journal article" date="2002" name="J. Bacteriol.">
        <title>Genome sequence of Yersinia pestis KIM.</title>
        <authorList>
            <person name="Deng W."/>
            <person name="Burland V."/>
            <person name="Plunkett G. III"/>
            <person name="Boutin A."/>
            <person name="Mayhew G.F."/>
            <person name="Liss P."/>
            <person name="Perna N.T."/>
            <person name="Rose D.J."/>
            <person name="Mau B."/>
            <person name="Zhou S."/>
            <person name="Schwartz D.C."/>
            <person name="Fetherston J.D."/>
            <person name="Lindler L.E."/>
            <person name="Brubaker R.R."/>
            <person name="Plano G.V."/>
            <person name="Straley S.C."/>
            <person name="McDonough K.A."/>
            <person name="Nilles M.L."/>
            <person name="Matson J.S."/>
            <person name="Blattner F.R."/>
            <person name="Perry R.D."/>
        </authorList>
    </citation>
    <scope>NUCLEOTIDE SEQUENCE [LARGE SCALE GENOMIC DNA]</scope>
    <source>
        <strain>KIM10+ / Biovar Mediaevalis</strain>
    </source>
</reference>
<reference key="3">
    <citation type="journal article" date="2004" name="DNA Res.">
        <title>Complete genome sequence of Yersinia pestis strain 91001, an isolate avirulent to humans.</title>
        <authorList>
            <person name="Song Y."/>
            <person name="Tong Z."/>
            <person name="Wang J."/>
            <person name="Wang L."/>
            <person name="Guo Z."/>
            <person name="Han Y."/>
            <person name="Zhang J."/>
            <person name="Pei D."/>
            <person name="Zhou D."/>
            <person name="Qin H."/>
            <person name="Pang X."/>
            <person name="Han Y."/>
            <person name="Zhai J."/>
            <person name="Li M."/>
            <person name="Cui B."/>
            <person name="Qi Z."/>
            <person name="Jin L."/>
            <person name="Dai R."/>
            <person name="Chen F."/>
            <person name="Li S."/>
            <person name="Ye C."/>
            <person name="Du Z."/>
            <person name="Lin W."/>
            <person name="Wang J."/>
            <person name="Yu J."/>
            <person name="Yang H."/>
            <person name="Wang J."/>
            <person name="Huang P."/>
            <person name="Yang R."/>
        </authorList>
    </citation>
    <scope>NUCLEOTIDE SEQUENCE [LARGE SCALE GENOMIC DNA]</scope>
    <source>
        <strain>91001 / Biovar Mediaevalis</strain>
    </source>
</reference>
<keyword id="KW-0030">Aminoacyl-tRNA synthetase</keyword>
<keyword id="KW-0067">ATP-binding</keyword>
<keyword id="KW-0963">Cytoplasm</keyword>
<keyword id="KW-0436">Ligase</keyword>
<keyword id="KW-0479">Metal-binding</keyword>
<keyword id="KW-0547">Nucleotide-binding</keyword>
<keyword id="KW-0648">Protein biosynthesis</keyword>
<keyword id="KW-1185">Reference proteome</keyword>
<keyword id="KW-0862">Zinc</keyword>
<sequence length="471" mass="53110">MKIKTRFAPSPTGYLHVGGARTALYSWLFSRHLGGEFVLRIEDTDLGRSTQEAIDAIMDGMNWLNLDWDEGPYFQTKRFDRYNAVIDQMLDAGTAYRCYCSKERLEALREAQMANGEKPRYDGHCRDSQCTHGADEPSVVRFRNPQEGSVIFDDKIRGPIEFSNQELDDLIIRRTDGSPTYNFCVVIDDWDMEITHVIRGEDHINNTPRQINILKALGAPVPEYAHVSMILGDDGKKLSKRHGAVGVMQYRDDGYLPEALLNYLVRLGWSHGDQEIFSIEEMTQLFTLDAVSKSASAFNTEKLQWLNHHYINSLPPEQVAVHLSWHVEQLGIDTRNGPELVEIVKLLGERCKTLKEMAESCRYFYEEFDAFDVDAAKKHLRPIARQPLEAVKVKLAAITEWTTENVHNAIQGTADELGVGMGKVGMPLRVAVTGVGQSPGMDVTVHAIGQARTLARIDKALAFISEREAQQ</sequence>
<comment type="function">
    <text evidence="1">Catalyzes the attachment of glutamate to tRNA(Glu) in a two-step reaction: glutamate is first activated by ATP to form Glu-AMP and then transferred to the acceptor end of tRNA(Glu).</text>
</comment>
<comment type="catalytic activity">
    <reaction evidence="1">
        <text>tRNA(Glu) + L-glutamate + ATP = L-glutamyl-tRNA(Glu) + AMP + diphosphate</text>
        <dbReference type="Rhea" id="RHEA:23540"/>
        <dbReference type="Rhea" id="RHEA-COMP:9663"/>
        <dbReference type="Rhea" id="RHEA-COMP:9680"/>
        <dbReference type="ChEBI" id="CHEBI:29985"/>
        <dbReference type="ChEBI" id="CHEBI:30616"/>
        <dbReference type="ChEBI" id="CHEBI:33019"/>
        <dbReference type="ChEBI" id="CHEBI:78442"/>
        <dbReference type="ChEBI" id="CHEBI:78520"/>
        <dbReference type="ChEBI" id="CHEBI:456215"/>
        <dbReference type="EC" id="6.1.1.17"/>
    </reaction>
</comment>
<comment type="cofactor">
    <cofactor evidence="1">
        <name>Zn(2+)</name>
        <dbReference type="ChEBI" id="CHEBI:29105"/>
    </cofactor>
    <text evidence="1">Binds 1 zinc ion per subunit.</text>
</comment>
<comment type="subunit">
    <text evidence="1">Monomer.</text>
</comment>
<comment type="subcellular location">
    <subcellularLocation>
        <location evidence="1">Cytoplasm</location>
    </subcellularLocation>
</comment>
<comment type="similarity">
    <text evidence="1">Belongs to the class-I aminoacyl-tRNA synthetase family. Glutamate--tRNA ligase type 1 subfamily.</text>
</comment>
<proteinExistence type="inferred from homology"/>
<evidence type="ECO:0000255" key="1">
    <source>
        <dbReference type="HAMAP-Rule" id="MF_00022"/>
    </source>
</evidence>
<feature type="chain" id="PRO_0000119708" description="Glutamate--tRNA ligase">
    <location>
        <begin position="1"/>
        <end position="471"/>
    </location>
</feature>
<feature type="short sequence motif" description="'HIGH' region" evidence="1">
    <location>
        <begin position="9"/>
        <end position="19"/>
    </location>
</feature>
<feature type="short sequence motif" description="'KMSKS' region" evidence="1">
    <location>
        <begin position="237"/>
        <end position="241"/>
    </location>
</feature>
<feature type="binding site" evidence="1">
    <location>
        <position position="98"/>
    </location>
    <ligand>
        <name>Zn(2+)</name>
        <dbReference type="ChEBI" id="CHEBI:29105"/>
    </ligand>
</feature>
<feature type="binding site" evidence="1">
    <location>
        <position position="100"/>
    </location>
    <ligand>
        <name>Zn(2+)</name>
        <dbReference type="ChEBI" id="CHEBI:29105"/>
    </ligand>
</feature>
<feature type="binding site" evidence="1">
    <location>
        <position position="125"/>
    </location>
    <ligand>
        <name>Zn(2+)</name>
        <dbReference type="ChEBI" id="CHEBI:29105"/>
    </ligand>
</feature>
<feature type="binding site" evidence="1">
    <location>
        <position position="127"/>
    </location>
    <ligand>
        <name>Zn(2+)</name>
        <dbReference type="ChEBI" id="CHEBI:29105"/>
    </ligand>
</feature>
<feature type="binding site" evidence="1">
    <location>
        <position position="240"/>
    </location>
    <ligand>
        <name>ATP</name>
        <dbReference type="ChEBI" id="CHEBI:30616"/>
    </ligand>
</feature>
<organism>
    <name type="scientific">Yersinia pestis</name>
    <dbReference type="NCBI Taxonomy" id="632"/>
    <lineage>
        <taxon>Bacteria</taxon>
        <taxon>Pseudomonadati</taxon>
        <taxon>Pseudomonadota</taxon>
        <taxon>Gammaproteobacteria</taxon>
        <taxon>Enterobacterales</taxon>
        <taxon>Yersiniaceae</taxon>
        <taxon>Yersinia</taxon>
    </lineage>
</organism>
<gene>
    <name evidence="1" type="primary">gltX</name>
    <name type="ordered locus">YPO2984</name>
    <name type="ordered locus">y1498</name>
    <name type="ordered locus">YP_2609</name>
</gene>